<proteinExistence type="evidence at transcript level"/>
<evidence type="ECO:0000250" key="1"/>
<evidence type="ECO:0000255" key="2"/>
<evidence type="ECO:0000255" key="3">
    <source>
        <dbReference type="PROSITE-ProRule" id="PRU10052"/>
    </source>
</evidence>
<evidence type="ECO:0000256" key="4">
    <source>
        <dbReference type="SAM" id="MobiDB-lite"/>
    </source>
</evidence>
<evidence type="ECO:0000305" key="5"/>
<protein>
    <recommendedName>
        <fullName>Polygalacturonase</fullName>
        <shortName>PG</shortName>
        <ecNumber>3.2.1.15</ecNumber>
    </recommendedName>
    <alternativeName>
        <fullName>Pectinase</fullName>
    </alternativeName>
</protein>
<feature type="signal peptide" evidence="2">
    <location>
        <begin position="1"/>
        <end position="20"/>
    </location>
</feature>
<feature type="chain" id="PRO_0000024810" description="Polygalacturonase">
    <location>
        <begin position="21"/>
        <end position="421"/>
    </location>
</feature>
<feature type="repeat" description="PbH1 1">
    <location>
        <begin position="178"/>
        <end position="204"/>
    </location>
</feature>
<feature type="repeat" description="PbH1 2">
    <location>
        <begin position="205"/>
        <end position="226"/>
    </location>
</feature>
<feature type="repeat" description="PbH1 3">
    <location>
        <begin position="258"/>
        <end position="279"/>
    </location>
</feature>
<feature type="repeat" description="PbH1 4">
    <location>
        <begin position="289"/>
        <end position="310"/>
    </location>
</feature>
<feature type="region of interest" description="Disordered" evidence="4">
    <location>
        <begin position="394"/>
        <end position="421"/>
    </location>
</feature>
<feature type="active site" description="Proton donor" evidence="3">
    <location>
        <position position="219"/>
    </location>
</feature>
<feature type="active site" evidence="3">
    <location>
        <position position="242"/>
    </location>
</feature>
<feature type="glycosylation site" description="N-linked (GlcNAc...) asparagine" evidence="2">
    <location>
        <position position="156"/>
    </location>
</feature>
<feature type="glycosylation site" description="N-linked (GlcNAc...) asparagine" evidence="2">
    <location>
        <position position="180"/>
    </location>
</feature>
<feature type="glycosylation site" description="N-linked (GlcNAc...) asparagine" evidence="2">
    <location>
        <position position="265"/>
    </location>
</feature>
<name>PGLR_MEDSA</name>
<comment type="function">
    <text evidence="1">May function in the depolymerization of the pectin in its walls during pollen tube elongation, or in that of the pistil during pollination.</text>
</comment>
<comment type="catalytic activity">
    <reaction>
        <text>(1,4-alpha-D-galacturonosyl)n+m + H2O = (1,4-alpha-D-galacturonosyl)n + (1,4-alpha-D-galacturonosyl)m.</text>
        <dbReference type="EC" id="3.2.1.15"/>
    </reaction>
</comment>
<comment type="subcellular location">
    <subcellularLocation>
        <location evidence="1">Secreted</location>
    </subcellularLocation>
    <subcellularLocation>
        <location evidence="1">Secreted</location>
        <location evidence="1">Cell wall</location>
    </subcellularLocation>
</comment>
<comment type="tissue specificity">
    <text>Pollen specific.</text>
</comment>
<comment type="similarity">
    <text evidence="5">Belongs to the glycosyl hydrolase 28 family.</text>
</comment>
<sequence>MKFSTAIIVSFLFIADFCAAQSGVLDISKFGGKPNSDIGQALTSAWNEACASTTAAKIVIPAGTYQLNGIELKGPCKAPIELQVDGTIQAPADPSVIKGTEQWFKFLYMDHLTLSGKGVFDGQGATVYKKAAPASAWSGKNSNSKVFMNFGFNFVNNSIVRGVTSKDSKNFHVMVFGCKNITFDGFTITAPGDSPNTDGIHMGKSTDVKILNTNIGTGDDCVSIGDGSKQITVQGVNCGPGHGLSVGSLGKFTTEENVEGITVKNCTLTATDNGVRIKTWPDAPGTITVSDIHFEDITMTNVKNPVIIDQEYYPWNQCSKKNPSKIKLSKISFKNVKGTSGTAEGVVLICSSAVPCDGVELNNVDLKFNGAPTTAKCTNVKPLVTGTAPVCQAPGAPAASTTATPAASKTATPAAGKSPAK</sequence>
<accession>Q40312</accession>
<dbReference type="EC" id="3.2.1.15"/>
<dbReference type="EMBL" id="U20431">
    <property type="protein sequence ID" value="AAA62286.1"/>
    <property type="molecule type" value="mRNA"/>
</dbReference>
<dbReference type="PIR" id="T09398">
    <property type="entry name" value="T09398"/>
</dbReference>
<dbReference type="SMR" id="Q40312"/>
<dbReference type="CAZy" id="GH28">
    <property type="family name" value="Glycoside Hydrolase Family 28"/>
</dbReference>
<dbReference type="GO" id="GO:0005576">
    <property type="term" value="C:extracellular region"/>
    <property type="evidence" value="ECO:0007669"/>
    <property type="project" value="UniProtKB-SubCell"/>
</dbReference>
<dbReference type="GO" id="GO:0004650">
    <property type="term" value="F:polygalacturonase activity"/>
    <property type="evidence" value="ECO:0007669"/>
    <property type="project" value="UniProtKB-EC"/>
</dbReference>
<dbReference type="GO" id="GO:0005975">
    <property type="term" value="P:carbohydrate metabolic process"/>
    <property type="evidence" value="ECO:0007669"/>
    <property type="project" value="InterPro"/>
</dbReference>
<dbReference type="GO" id="GO:0071555">
    <property type="term" value="P:cell wall organization"/>
    <property type="evidence" value="ECO:0007669"/>
    <property type="project" value="UniProtKB-KW"/>
</dbReference>
<dbReference type="FunFam" id="2.160.20.10:FF:000004">
    <property type="entry name" value="Pectin lyase-like superfamily protein"/>
    <property type="match status" value="1"/>
</dbReference>
<dbReference type="Gene3D" id="2.160.20.10">
    <property type="entry name" value="Single-stranded right-handed beta-helix, Pectin lyase-like"/>
    <property type="match status" value="1"/>
</dbReference>
<dbReference type="InterPro" id="IPR000743">
    <property type="entry name" value="Glyco_hydro_28"/>
</dbReference>
<dbReference type="InterPro" id="IPR006626">
    <property type="entry name" value="PbH1"/>
</dbReference>
<dbReference type="InterPro" id="IPR012334">
    <property type="entry name" value="Pectin_lyas_fold"/>
</dbReference>
<dbReference type="InterPro" id="IPR011050">
    <property type="entry name" value="Pectin_lyase_fold/virulence"/>
</dbReference>
<dbReference type="PANTHER" id="PTHR31375">
    <property type="match status" value="1"/>
</dbReference>
<dbReference type="Pfam" id="PF00295">
    <property type="entry name" value="Glyco_hydro_28"/>
    <property type="match status" value="1"/>
</dbReference>
<dbReference type="SMART" id="SM00710">
    <property type="entry name" value="PbH1"/>
    <property type="match status" value="4"/>
</dbReference>
<dbReference type="SUPFAM" id="SSF51126">
    <property type="entry name" value="Pectin lyase-like"/>
    <property type="match status" value="1"/>
</dbReference>
<dbReference type="PROSITE" id="PS00502">
    <property type="entry name" value="POLYGALACTURONASE"/>
    <property type="match status" value="1"/>
</dbReference>
<reference key="1">
    <citation type="submission" date="1995-03" db="EMBL/GenBank/DDBJ databases">
        <authorList>
            <person name="Qiu X."/>
            <person name="Erickson L."/>
        </authorList>
    </citation>
    <scope>NUCLEOTIDE SEQUENCE [MRNA]</scope>
    <source>
        <strain>cv. C2-4</strain>
        <tissue>Pollen</tissue>
    </source>
</reference>
<keyword id="KW-0134">Cell wall</keyword>
<keyword id="KW-0961">Cell wall biogenesis/degradation</keyword>
<keyword id="KW-0325">Glycoprotein</keyword>
<keyword id="KW-0326">Glycosidase</keyword>
<keyword id="KW-0378">Hydrolase</keyword>
<keyword id="KW-0677">Repeat</keyword>
<keyword id="KW-0964">Secreted</keyword>
<keyword id="KW-0732">Signal</keyword>
<organism>
    <name type="scientific">Medicago sativa</name>
    <name type="common">Alfalfa</name>
    <dbReference type="NCBI Taxonomy" id="3879"/>
    <lineage>
        <taxon>Eukaryota</taxon>
        <taxon>Viridiplantae</taxon>
        <taxon>Streptophyta</taxon>
        <taxon>Embryophyta</taxon>
        <taxon>Tracheophyta</taxon>
        <taxon>Spermatophyta</taxon>
        <taxon>Magnoliopsida</taxon>
        <taxon>eudicotyledons</taxon>
        <taxon>Gunneridae</taxon>
        <taxon>Pentapetalae</taxon>
        <taxon>rosids</taxon>
        <taxon>fabids</taxon>
        <taxon>Fabales</taxon>
        <taxon>Fabaceae</taxon>
        <taxon>Papilionoideae</taxon>
        <taxon>50 kb inversion clade</taxon>
        <taxon>NPAAA clade</taxon>
        <taxon>Hologalegina</taxon>
        <taxon>IRL clade</taxon>
        <taxon>Trifolieae</taxon>
        <taxon>Medicago</taxon>
    </lineage>
</organism>